<reference key="1">
    <citation type="journal article" date="2005" name="Science">
        <title>The transcriptional landscape of the mammalian genome.</title>
        <authorList>
            <person name="Carninci P."/>
            <person name="Kasukawa T."/>
            <person name="Katayama S."/>
            <person name="Gough J."/>
            <person name="Frith M.C."/>
            <person name="Maeda N."/>
            <person name="Oyama R."/>
            <person name="Ravasi T."/>
            <person name="Lenhard B."/>
            <person name="Wells C."/>
            <person name="Kodzius R."/>
            <person name="Shimokawa K."/>
            <person name="Bajic V.B."/>
            <person name="Brenner S.E."/>
            <person name="Batalov S."/>
            <person name="Forrest A.R."/>
            <person name="Zavolan M."/>
            <person name="Davis M.J."/>
            <person name="Wilming L.G."/>
            <person name="Aidinis V."/>
            <person name="Allen J.E."/>
            <person name="Ambesi-Impiombato A."/>
            <person name="Apweiler R."/>
            <person name="Aturaliya R.N."/>
            <person name="Bailey T.L."/>
            <person name="Bansal M."/>
            <person name="Baxter L."/>
            <person name="Beisel K.W."/>
            <person name="Bersano T."/>
            <person name="Bono H."/>
            <person name="Chalk A.M."/>
            <person name="Chiu K.P."/>
            <person name="Choudhary V."/>
            <person name="Christoffels A."/>
            <person name="Clutterbuck D.R."/>
            <person name="Crowe M.L."/>
            <person name="Dalla E."/>
            <person name="Dalrymple B.P."/>
            <person name="de Bono B."/>
            <person name="Della Gatta G."/>
            <person name="di Bernardo D."/>
            <person name="Down T."/>
            <person name="Engstrom P."/>
            <person name="Fagiolini M."/>
            <person name="Faulkner G."/>
            <person name="Fletcher C.F."/>
            <person name="Fukushima T."/>
            <person name="Furuno M."/>
            <person name="Futaki S."/>
            <person name="Gariboldi M."/>
            <person name="Georgii-Hemming P."/>
            <person name="Gingeras T.R."/>
            <person name="Gojobori T."/>
            <person name="Green R.E."/>
            <person name="Gustincich S."/>
            <person name="Harbers M."/>
            <person name="Hayashi Y."/>
            <person name="Hensch T.K."/>
            <person name="Hirokawa N."/>
            <person name="Hill D."/>
            <person name="Huminiecki L."/>
            <person name="Iacono M."/>
            <person name="Ikeo K."/>
            <person name="Iwama A."/>
            <person name="Ishikawa T."/>
            <person name="Jakt M."/>
            <person name="Kanapin A."/>
            <person name="Katoh M."/>
            <person name="Kawasawa Y."/>
            <person name="Kelso J."/>
            <person name="Kitamura H."/>
            <person name="Kitano H."/>
            <person name="Kollias G."/>
            <person name="Krishnan S.P."/>
            <person name="Kruger A."/>
            <person name="Kummerfeld S.K."/>
            <person name="Kurochkin I.V."/>
            <person name="Lareau L.F."/>
            <person name="Lazarevic D."/>
            <person name="Lipovich L."/>
            <person name="Liu J."/>
            <person name="Liuni S."/>
            <person name="McWilliam S."/>
            <person name="Madan Babu M."/>
            <person name="Madera M."/>
            <person name="Marchionni L."/>
            <person name="Matsuda H."/>
            <person name="Matsuzawa S."/>
            <person name="Miki H."/>
            <person name="Mignone F."/>
            <person name="Miyake S."/>
            <person name="Morris K."/>
            <person name="Mottagui-Tabar S."/>
            <person name="Mulder N."/>
            <person name="Nakano N."/>
            <person name="Nakauchi H."/>
            <person name="Ng P."/>
            <person name="Nilsson R."/>
            <person name="Nishiguchi S."/>
            <person name="Nishikawa S."/>
            <person name="Nori F."/>
            <person name="Ohara O."/>
            <person name="Okazaki Y."/>
            <person name="Orlando V."/>
            <person name="Pang K.C."/>
            <person name="Pavan W.J."/>
            <person name="Pavesi G."/>
            <person name="Pesole G."/>
            <person name="Petrovsky N."/>
            <person name="Piazza S."/>
            <person name="Reed J."/>
            <person name="Reid J.F."/>
            <person name="Ring B.Z."/>
            <person name="Ringwald M."/>
            <person name="Rost B."/>
            <person name="Ruan Y."/>
            <person name="Salzberg S.L."/>
            <person name="Sandelin A."/>
            <person name="Schneider C."/>
            <person name="Schoenbach C."/>
            <person name="Sekiguchi K."/>
            <person name="Semple C.A."/>
            <person name="Seno S."/>
            <person name="Sessa L."/>
            <person name="Sheng Y."/>
            <person name="Shibata Y."/>
            <person name="Shimada H."/>
            <person name="Shimada K."/>
            <person name="Silva D."/>
            <person name="Sinclair B."/>
            <person name="Sperling S."/>
            <person name="Stupka E."/>
            <person name="Sugiura K."/>
            <person name="Sultana R."/>
            <person name="Takenaka Y."/>
            <person name="Taki K."/>
            <person name="Tammoja K."/>
            <person name="Tan S.L."/>
            <person name="Tang S."/>
            <person name="Taylor M.S."/>
            <person name="Tegner J."/>
            <person name="Teichmann S.A."/>
            <person name="Ueda H.R."/>
            <person name="van Nimwegen E."/>
            <person name="Verardo R."/>
            <person name="Wei C.L."/>
            <person name="Yagi K."/>
            <person name="Yamanishi H."/>
            <person name="Zabarovsky E."/>
            <person name="Zhu S."/>
            <person name="Zimmer A."/>
            <person name="Hide W."/>
            <person name="Bult C."/>
            <person name="Grimmond S.M."/>
            <person name="Teasdale R.D."/>
            <person name="Liu E.T."/>
            <person name="Brusic V."/>
            <person name="Quackenbush J."/>
            <person name="Wahlestedt C."/>
            <person name="Mattick J.S."/>
            <person name="Hume D.A."/>
            <person name="Kai C."/>
            <person name="Sasaki D."/>
            <person name="Tomaru Y."/>
            <person name="Fukuda S."/>
            <person name="Kanamori-Katayama M."/>
            <person name="Suzuki M."/>
            <person name="Aoki J."/>
            <person name="Arakawa T."/>
            <person name="Iida J."/>
            <person name="Imamura K."/>
            <person name="Itoh M."/>
            <person name="Kato T."/>
            <person name="Kawaji H."/>
            <person name="Kawagashira N."/>
            <person name="Kawashima T."/>
            <person name="Kojima M."/>
            <person name="Kondo S."/>
            <person name="Konno H."/>
            <person name="Nakano K."/>
            <person name="Ninomiya N."/>
            <person name="Nishio T."/>
            <person name="Okada M."/>
            <person name="Plessy C."/>
            <person name="Shibata K."/>
            <person name="Shiraki T."/>
            <person name="Suzuki S."/>
            <person name="Tagami M."/>
            <person name="Waki K."/>
            <person name="Watahiki A."/>
            <person name="Okamura-Oho Y."/>
            <person name="Suzuki H."/>
            <person name="Kawai J."/>
            <person name="Hayashizaki Y."/>
        </authorList>
    </citation>
    <scope>NUCLEOTIDE SEQUENCE [LARGE SCALE MRNA]</scope>
    <source>
        <strain>C57BL/6J</strain>
        <tissue>Bone marrow</tissue>
        <tissue>Head</tissue>
        <tissue>Skin</tissue>
    </source>
</reference>
<reference key="2">
    <citation type="journal article" date="2004" name="Genome Res.">
        <title>The status, quality, and expansion of the NIH full-length cDNA project: the Mammalian Gene Collection (MGC).</title>
        <authorList>
            <consortium name="The MGC Project Team"/>
        </authorList>
    </citation>
    <scope>NUCLEOTIDE SEQUENCE [LARGE SCALE MRNA]</scope>
    <source>
        <strain>FVB/N</strain>
        <tissue>Colon</tissue>
    </source>
</reference>
<reference key="3">
    <citation type="journal article" date="2005" name="Biochem. J.">
        <title>Mammalian Lass6 and its related family members regulate synthesis of specific ceramides.</title>
        <authorList>
            <person name="Mizutani Y."/>
            <person name="Kihara A."/>
            <person name="Igarashi Y."/>
        </authorList>
    </citation>
    <scope>FUNCTION</scope>
    <scope>CATALYTIC ACTIVITY</scope>
    <scope>GLYCOSYLATION AT ASN-18</scope>
    <scope>TISSUE SPECIFICITY</scope>
    <scope>SUBCELLULAR LOCATION</scope>
    <scope>PATHWAY</scope>
</reference>
<reference key="4">
    <citation type="journal article" date="2008" name="J. Lipid Res.">
        <title>2-Hydroxy-ceramide synthesis by ceramide synthase family: enzymatic basis for the preference of FA chain length.</title>
        <authorList>
            <person name="Mizutani Y."/>
            <person name="Kihara A."/>
            <person name="Chiba H."/>
            <person name="Tojo H."/>
            <person name="Igarashi Y."/>
        </authorList>
    </citation>
    <scope>FUNCTION</scope>
    <scope>CATALYTIC ACTIVITY</scope>
    <scope>PATHWAY</scope>
</reference>
<reference key="5">
    <citation type="journal article" date="2012" name="J. Immunol.">
        <title>Ceramide synthase 6 plays a critical role in the development of experimental autoimmune encephalomyelitis.</title>
        <authorList>
            <person name="Schiffmann S."/>
            <person name="Ferreiros N."/>
            <person name="Birod K."/>
            <person name="Eberle M."/>
            <person name="Schreiber Y."/>
            <person name="Pfeilschifter W."/>
            <person name="Ziemann U."/>
            <person name="Pierre S."/>
            <person name="Scholich K."/>
            <person name="Groesch S."/>
            <person name="Geisslinger G."/>
        </authorList>
    </citation>
    <scope>FUNCTION</scope>
</reference>
<reference key="6">
    <citation type="journal article" date="2013" name="J. Biol. Chem.">
        <title>Inactivation of ceramide synthase 6 in mice results in an altered sphingolipid metabolism and behavioral abnormalities.</title>
        <authorList>
            <person name="Ebel P."/>
            <person name="Vom Dorp K."/>
            <person name="Petrasch-Parwez E."/>
            <person name="Zlomuzica A."/>
            <person name="Kinugawa K."/>
            <person name="Mariani J."/>
            <person name="Minich D."/>
            <person name="Ginkel C."/>
            <person name="Welcker J."/>
            <person name="Degen J."/>
            <person name="Eckhardt M."/>
            <person name="Dere E."/>
            <person name="Doermann P."/>
            <person name="Willecke K."/>
        </authorList>
    </citation>
    <scope>FUNCTION</scope>
    <scope>TISSUE SPECIFICITY</scope>
    <scope>GLYCOSYLATION</scope>
    <scope>DISRUPTION PHENOTYPE</scope>
</reference>
<reference key="7">
    <citation type="journal article" date="2014" name="Cell Metab.">
        <title>Obesity-induced CerS6-dependent C16:0 ceramide production promotes weight gain and glucose intolerance.</title>
        <authorList>
            <person name="Turpin S.M."/>
            <person name="Nicholls H.T."/>
            <person name="Willmes D.M."/>
            <person name="Mourier A."/>
            <person name="Brodesser S."/>
            <person name="Wunderlich C.M."/>
            <person name="Mauer J."/>
            <person name="Xu E."/>
            <person name="Hammerschmidt P."/>
            <person name="Broenneke H.S."/>
            <person name="Trifunovic A."/>
            <person name="LoSasso G."/>
            <person name="Wunderlich F.T."/>
            <person name="Kornfeld J.W."/>
            <person name="Blueher M."/>
            <person name="Kroenke M."/>
            <person name="Bruening J.C."/>
        </authorList>
    </citation>
    <scope>DISRUPTION PHENOTYPE</scope>
</reference>
<reference key="8">
    <citation type="journal article" date="2016" name="J. Biol. Chem.">
        <title>SIRT3 deacetylates ceramide synthases: Implications for mitochondrial dysfunction and brain injury.</title>
        <authorList>
            <person name="Novgorodov S.A."/>
            <person name="Riley C.L."/>
            <person name="Keffler J.A."/>
            <person name="Yu J."/>
            <person name="Kindy M.S."/>
            <person name="Macklin W.B."/>
            <person name="Lombard D.B."/>
            <person name="Gudz T.I."/>
        </authorList>
    </citation>
    <scope>ACETYLATION</scope>
    <scope>DEACETYLATION BY SIRT3</scope>
</reference>
<reference key="9">
    <citation type="journal article" date="2019" name="Cell">
        <title>CerS6-derived sphingolipids interact with Mff and promote mitochondrial fragmentation in obesity.</title>
        <authorList>
            <person name="Hammerschmidt P."/>
            <person name="Ostkotte D."/>
            <person name="Nolte H."/>
            <person name="Gerl M.J."/>
            <person name="Jais A."/>
            <person name="Brunner H.L."/>
            <person name="Sprenger H.G."/>
            <person name="Awazawa M."/>
            <person name="Nicholls H.T."/>
            <person name="Turpin-Nolan S.M."/>
            <person name="Langer T."/>
            <person name="Krueger M."/>
            <person name="Bruegger B."/>
            <person name="Bruening J.C."/>
        </authorList>
    </citation>
    <scope>FUNCTION</scope>
    <scope>CATALYTIC ACTIVITY</scope>
    <scope>DISRUPTION PHENOTYPE</scope>
    <scope>PATHWAY</scope>
</reference>
<reference key="10">
    <citation type="journal article" date="2019" name="Mol. Metab.">
        <title>The role of C16:0 ceramide in the development of obesity and type 2 diabetes: CerS6 inhibition as a novel therapeutic approach.</title>
        <authorList>
            <person name="Raichur S."/>
            <person name="Brunner B."/>
            <person name="Bielohuby M."/>
            <person name="Hansen G."/>
            <person name="Pfenninger A."/>
            <person name="Wang B."/>
            <person name="Bruning J.C."/>
            <person name="Larsen P.J."/>
            <person name="Tennagels N."/>
        </authorList>
    </citation>
    <scope>FUNCTION</scope>
</reference>
<reference key="11">
    <citation type="submission" date="2005-10" db="PDB data bank">
        <title>Solution structure of the homeobox domain of mouse LAG1 longevity assurance homolog 6.</title>
        <authorList>
            <consortium name="RIKEN structural genomics initiative (RSGI)"/>
        </authorList>
    </citation>
    <scope>STRUCTURE BY NMR OF 76-127</scope>
</reference>
<dbReference type="EC" id="2.3.1.-" evidence="5 6 12"/>
<dbReference type="EC" id="2.3.1.291" evidence="5 6 12"/>
<dbReference type="EMBL" id="AK028849">
    <property type="protein sequence ID" value="BAC26153.1"/>
    <property type="molecule type" value="mRNA"/>
</dbReference>
<dbReference type="EMBL" id="AK081354">
    <property type="protein sequence ID" value="BAC38204.1"/>
    <property type="status" value="ALT_SEQ"/>
    <property type="molecule type" value="mRNA"/>
</dbReference>
<dbReference type="EMBL" id="AK151848">
    <property type="protein sequence ID" value="BAE30739.1"/>
    <property type="molecule type" value="mRNA"/>
</dbReference>
<dbReference type="EMBL" id="AK152417">
    <property type="protein sequence ID" value="BAE31202.1"/>
    <property type="molecule type" value="mRNA"/>
</dbReference>
<dbReference type="EMBL" id="BC057629">
    <property type="protein sequence ID" value="AAH57629.1"/>
    <property type="molecule type" value="mRNA"/>
</dbReference>
<dbReference type="CCDS" id="CCDS16086.1"/>
<dbReference type="RefSeq" id="NP_766444.1">
    <property type="nucleotide sequence ID" value="NM_172856.5"/>
</dbReference>
<dbReference type="PDB" id="1X2M">
    <property type="method" value="NMR"/>
    <property type="chains" value="A=76-126"/>
</dbReference>
<dbReference type="PDBsum" id="1X2M"/>
<dbReference type="SMR" id="Q8C172"/>
<dbReference type="BioGRID" id="232313">
    <property type="interactions" value="1"/>
</dbReference>
<dbReference type="FunCoup" id="Q8C172">
    <property type="interactions" value="2463"/>
</dbReference>
<dbReference type="STRING" id="10090.ENSMUSP00000135604"/>
<dbReference type="SwissLipids" id="SLP:000000119"/>
<dbReference type="GlyConnect" id="2204">
    <property type="glycosylation" value="5 N-Linked glycans (1 site)"/>
</dbReference>
<dbReference type="GlyCosmos" id="Q8C172">
    <property type="glycosylation" value="1 site, 5 glycans"/>
</dbReference>
<dbReference type="GlyGen" id="Q8C172">
    <property type="glycosylation" value="2 sites, 5 N-linked glycans (1 site), 1 O-linked glycan (1 site)"/>
</dbReference>
<dbReference type="iPTMnet" id="Q8C172"/>
<dbReference type="PhosphoSitePlus" id="Q8C172"/>
<dbReference type="SwissPalm" id="Q8C172"/>
<dbReference type="jPOST" id="Q8C172"/>
<dbReference type="PaxDb" id="10090-ENSMUSP00000028426"/>
<dbReference type="ProteomicsDB" id="281384"/>
<dbReference type="Pumba" id="Q8C172"/>
<dbReference type="Antibodypedia" id="33795">
    <property type="antibodies" value="224 antibodies from 26 providers"/>
</dbReference>
<dbReference type="DNASU" id="241447"/>
<dbReference type="Ensembl" id="ENSMUST00000028426.9">
    <property type="protein sequence ID" value="ENSMUSP00000028426.3"/>
    <property type="gene ID" value="ENSMUSG00000027035.11"/>
</dbReference>
<dbReference type="GeneID" id="241447"/>
<dbReference type="KEGG" id="mmu:241447"/>
<dbReference type="UCSC" id="uc008jxs.1">
    <property type="organism name" value="mouse"/>
</dbReference>
<dbReference type="AGR" id="MGI:2442564"/>
<dbReference type="CTD" id="253782"/>
<dbReference type="MGI" id="MGI:2442564">
    <property type="gene designation" value="Cers6"/>
</dbReference>
<dbReference type="VEuPathDB" id="HostDB:ENSMUSG00000027035"/>
<dbReference type="eggNOG" id="KOG1607">
    <property type="taxonomic scope" value="Eukaryota"/>
</dbReference>
<dbReference type="GeneTree" id="ENSGT01030000234515"/>
<dbReference type="InParanoid" id="Q8C172"/>
<dbReference type="OMA" id="YLIGAPY"/>
<dbReference type="OrthoDB" id="537032at2759"/>
<dbReference type="PhylomeDB" id="Q8C172"/>
<dbReference type="TreeFam" id="TF314319"/>
<dbReference type="BRENDA" id="2.3.1.24">
    <property type="organism ID" value="3474"/>
</dbReference>
<dbReference type="Reactome" id="R-MMU-1660661">
    <property type="pathway name" value="Sphingolipid de novo biosynthesis"/>
</dbReference>
<dbReference type="UniPathway" id="UPA00222"/>
<dbReference type="BioGRID-ORCS" id="241447">
    <property type="hits" value="5 hits in 80 CRISPR screens"/>
</dbReference>
<dbReference type="ChiTaRS" id="Cers6">
    <property type="organism name" value="mouse"/>
</dbReference>
<dbReference type="EvolutionaryTrace" id="Q8C172"/>
<dbReference type="PRO" id="PR:Q8C172"/>
<dbReference type="Proteomes" id="UP000000589">
    <property type="component" value="Chromosome 2"/>
</dbReference>
<dbReference type="RNAct" id="Q8C172">
    <property type="molecule type" value="protein"/>
</dbReference>
<dbReference type="Bgee" id="ENSMUSG00000027035">
    <property type="expression patterns" value="Expressed in animal zygote and 223 other cell types or tissues"/>
</dbReference>
<dbReference type="ExpressionAtlas" id="Q8C172">
    <property type="expression patterns" value="baseline and differential"/>
</dbReference>
<dbReference type="GO" id="GO:0005783">
    <property type="term" value="C:endoplasmic reticulum"/>
    <property type="evidence" value="ECO:0000314"/>
    <property type="project" value="MGI"/>
</dbReference>
<dbReference type="GO" id="GO:0005789">
    <property type="term" value="C:endoplasmic reticulum membrane"/>
    <property type="evidence" value="ECO:0007669"/>
    <property type="project" value="UniProtKB-SubCell"/>
</dbReference>
<dbReference type="GO" id="GO:0003677">
    <property type="term" value="F:DNA binding"/>
    <property type="evidence" value="ECO:0007669"/>
    <property type="project" value="InterPro"/>
</dbReference>
<dbReference type="GO" id="GO:0050291">
    <property type="term" value="F:sphingosine N-acyltransferase activity"/>
    <property type="evidence" value="ECO:0000314"/>
    <property type="project" value="MGI"/>
</dbReference>
<dbReference type="GO" id="GO:0046513">
    <property type="term" value="P:ceramide biosynthetic process"/>
    <property type="evidence" value="ECO:0000314"/>
    <property type="project" value="UniProtKB"/>
</dbReference>
<dbReference type="GO" id="GO:0006954">
    <property type="term" value="P:inflammatory response"/>
    <property type="evidence" value="ECO:0007669"/>
    <property type="project" value="UniProtKB-KW"/>
</dbReference>
<dbReference type="GO" id="GO:0030148">
    <property type="term" value="P:sphingolipid biosynthetic process"/>
    <property type="evidence" value="ECO:0000314"/>
    <property type="project" value="MGI"/>
</dbReference>
<dbReference type="CDD" id="cd00086">
    <property type="entry name" value="homeodomain"/>
    <property type="match status" value="1"/>
</dbReference>
<dbReference type="FunFam" id="1.10.10.60:FF:000020">
    <property type="entry name" value="Ceramide synthase 5"/>
    <property type="match status" value="1"/>
</dbReference>
<dbReference type="Gene3D" id="1.10.10.60">
    <property type="entry name" value="Homeodomain-like"/>
    <property type="match status" value="1"/>
</dbReference>
<dbReference type="InterPro" id="IPR001356">
    <property type="entry name" value="HD"/>
</dbReference>
<dbReference type="InterPro" id="IPR009057">
    <property type="entry name" value="Homeodomain-like_sf"/>
</dbReference>
<dbReference type="InterPro" id="IPR016439">
    <property type="entry name" value="Lag1/Lac1-like"/>
</dbReference>
<dbReference type="InterPro" id="IPR006634">
    <property type="entry name" value="TLC-dom"/>
</dbReference>
<dbReference type="PANTHER" id="PTHR12560:SF43">
    <property type="entry name" value="CERAMIDE SYNTHASE 6"/>
    <property type="match status" value="1"/>
</dbReference>
<dbReference type="PANTHER" id="PTHR12560">
    <property type="entry name" value="LONGEVITY ASSURANCE FACTOR 1 LAG1"/>
    <property type="match status" value="1"/>
</dbReference>
<dbReference type="Pfam" id="PF00046">
    <property type="entry name" value="Homeodomain"/>
    <property type="match status" value="1"/>
</dbReference>
<dbReference type="Pfam" id="PF03798">
    <property type="entry name" value="TRAM_LAG1_CLN8"/>
    <property type="match status" value="1"/>
</dbReference>
<dbReference type="PIRSF" id="PIRSF005225">
    <property type="entry name" value="LAG1_LAC1"/>
    <property type="match status" value="1"/>
</dbReference>
<dbReference type="SMART" id="SM00724">
    <property type="entry name" value="TLC"/>
    <property type="match status" value="1"/>
</dbReference>
<dbReference type="SUPFAM" id="SSF46689">
    <property type="entry name" value="Homeodomain-like"/>
    <property type="match status" value="1"/>
</dbReference>
<dbReference type="PROSITE" id="PS50922">
    <property type="entry name" value="TLC"/>
    <property type="match status" value="1"/>
</dbReference>
<proteinExistence type="evidence at protein level"/>
<keyword id="KW-0002">3D-structure</keyword>
<keyword id="KW-0007">Acetylation</keyword>
<keyword id="KW-0256">Endoplasmic reticulum</keyword>
<keyword id="KW-0325">Glycoprotein</keyword>
<keyword id="KW-0395">Inflammatory response</keyword>
<keyword id="KW-0444">Lipid biosynthesis</keyword>
<keyword id="KW-0443">Lipid metabolism</keyword>
<keyword id="KW-0472">Membrane</keyword>
<keyword id="KW-0597">Phosphoprotein</keyword>
<keyword id="KW-1185">Reference proteome</keyword>
<keyword id="KW-0808">Transferase</keyword>
<keyword id="KW-0812">Transmembrane</keyword>
<keyword id="KW-1133">Transmembrane helix</keyword>
<protein>
    <recommendedName>
        <fullName evidence="14">Ceramide synthase 6</fullName>
        <shortName evidence="14">CerS6</shortName>
        <ecNumber evidence="5 6 12">2.3.1.-</ecNumber>
    </recommendedName>
    <alternativeName>
        <fullName evidence="13">LAG1 longevity assurance homolog 6</fullName>
    </alternativeName>
    <alternativeName>
        <fullName evidence="14">Sphingoid base N-palmitoyltransferase CERS6</fullName>
        <ecNumber evidence="5 6 12">2.3.1.291</ecNumber>
    </alternativeName>
</protein>
<sequence length="384" mass="44813">MAGILAWFWNERFWLPHNVTWADLKNTEEATFPQAEDLYLAFPLAFCIFMVRLIFERFIAKPCAIALNIQANGPQTAQPNAILEKVFTAITKHPDEKRLEGLSKQLDWDVRSIQRWFRQRRNQEKPSTLTRFCESMWRFSFYLYVFSYGVRFLKQTPWLWNTRHCWYNYPYQPLTADLHYYYILELSFYWSLMVSQFTDIKRKDFGIMFLHHLATIFLITFSYVNNMARVGTLVLCLHDSADALLEAAKMANYAKFQKMCDLLFVMFAVVFITTRLGIFPLWVLNTTLFESWEIVGPYPSWWVFNLLLLLLQGLNCFWSYLIVKIACKTVSKGKVSKDDRSDIESSSDDEDSEPPGKKPHSSTTTNGTSGTNGYLLTGPCSVDD</sequence>
<comment type="function">
    <text evidence="5 6 7 8 9 11 12">Ceramide synthase that catalyzes the transfer of the acyl chain from acyl-CoA to a sphingoid base, with high selectivity toward palmitoyl-CoA (hexadecanoyl-CoA; C16:0-CoA) (PubMed:15823095, PubMed:18541923, PubMed:23760501, PubMed:31150623). Can use other acyl donors, but with less efficiency (PubMed:18541923). N-acylates sphinganine and sphingosine bases to form dihydroceramides and ceramides in de novo synthesis and salvage pathways, respectively. Ceramides generated by CERS6 play a role in inflammatory response (PubMed:22544924). Acts as a regulator of metabolism and hepatic lipid accumulation (PubMed:25295788, PubMed:30655217, PubMed:31150623). Under high fat diet, palmitoyl- (C16:0-) ceramides generated by CERS6 specifically bind the mitochondrial fission factor MFF, thereby promoting mitochondrial fragmentation and contributing to the development of obesity (PubMed:31150623).</text>
</comment>
<comment type="catalytic activity">
    <reaction evidence="5 6 12">
        <text>a sphingoid base + hexadecanoyl-CoA = an N-hexadecanoyl-sphingoid base + CoA + H(+)</text>
        <dbReference type="Rhea" id="RHEA:61472"/>
        <dbReference type="ChEBI" id="CHEBI:15378"/>
        <dbReference type="ChEBI" id="CHEBI:57287"/>
        <dbReference type="ChEBI" id="CHEBI:57379"/>
        <dbReference type="ChEBI" id="CHEBI:84410"/>
        <dbReference type="ChEBI" id="CHEBI:144703"/>
        <dbReference type="EC" id="2.3.1.291"/>
    </reaction>
    <physiologicalReaction direction="left-to-right" evidence="5 6 12">
        <dbReference type="Rhea" id="RHEA:61473"/>
    </physiologicalReaction>
</comment>
<comment type="catalytic activity">
    <reaction evidence="5 6 12">
        <text>sphinganine + hexadecanoyl-CoA = N-hexadecanoylsphinganine + CoA + H(+)</text>
        <dbReference type="Rhea" id="RHEA:36539"/>
        <dbReference type="ChEBI" id="CHEBI:15378"/>
        <dbReference type="ChEBI" id="CHEBI:57287"/>
        <dbReference type="ChEBI" id="CHEBI:57379"/>
        <dbReference type="ChEBI" id="CHEBI:57817"/>
        <dbReference type="ChEBI" id="CHEBI:67042"/>
    </reaction>
    <physiologicalReaction direction="left-to-right" evidence="5 6 12">
        <dbReference type="Rhea" id="RHEA:36540"/>
    </physiologicalReaction>
</comment>
<comment type="catalytic activity">
    <reaction evidence="1">
        <text>hexadecasphinganine + hexadecanoyl-CoA = N-hexadecanoylhexadecasphinganine + CoA + H(+)</text>
        <dbReference type="Rhea" id="RHEA:43040"/>
        <dbReference type="ChEBI" id="CHEBI:15378"/>
        <dbReference type="ChEBI" id="CHEBI:57287"/>
        <dbReference type="ChEBI" id="CHEBI:57379"/>
        <dbReference type="ChEBI" id="CHEBI:71009"/>
        <dbReference type="ChEBI" id="CHEBI:82810"/>
    </reaction>
    <physiologicalReaction direction="left-to-right" evidence="1">
        <dbReference type="Rhea" id="RHEA:43041"/>
    </physiologicalReaction>
</comment>
<comment type="catalytic activity">
    <reaction evidence="1">
        <text>sphing-4-enine + hexadecanoyl-CoA = N-hexadecanoylsphing-4-enine + CoA + H(+)</text>
        <dbReference type="Rhea" id="RHEA:36687"/>
        <dbReference type="ChEBI" id="CHEBI:15378"/>
        <dbReference type="ChEBI" id="CHEBI:57287"/>
        <dbReference type="ChEBI" id="CHEBI:57379"/>
        <dbReference type="ChEBI" id="CHEBI:57756"/>
        <dbReference type="ChEBI" id="CHEBI:72959"/>
    </reaction>
    <physiologicalReaction direction="left-to-right" evidence="1">
        <dbReference type="Rhea" id="RHEA:36688"/>
    </physiologicalReaction>
</comment>
<comment type="catalytic activity">
    <reaction evidence="5 6">
        <text>sphinganine + tetradecanoyl-CoA = N-(tetradecanoyl)-sphinganine + CoA + H(+)</text>
        <dbReference type="Rhea" id="RHEA:36571"/>
        <dbReference type="ChEBI" id="CHEBI:15378"/>
        <dbReference type="ChEBI" id="CHEBI:57287"/>
        <dbReference type="ChEBI" id="CHEBI:57385"/>
        <dbReference type="ChEBI" id="CHEBI:57817"/>
        <dbReference type="ChEBI" id="CHEBI:67045"/>
    </reaction>
    <physiologicalReaction direction="left-to-right" evidence="5 6">
        <dbReference type="Rhea" id="RHEA:36572"/>
    </physiologicalReaction>
</comment>
<comment type="catalytic activity">
    <reaction evidence="5 6">
        <text>sphinganine + octadecanoyl-CoA = N-(octadecanoyl)-sphinganine + CoA + H(+)</text>
        <dbReference type="Rhea" id="RHEA:36547"/>
        <dbReference type="ChEBI" id="CHEBI:15378"/>
        <dbReference type="ChEBI" id="CHEBI:57287"/>
        <dbReference type="ChEBI" id="CHEBI:57394"/>
        <dbReference type="ChEBI" id="CHEBI:57817"/>
        <dbReference type="ChEBI" id="CHEBI:67033"/>
    </reaction>
    <physiologicalReaction direction="left-to-right" evidence="5 6">
        <dbReference type="Rhea" id="RHEA:36548"/>
    </physiologicalReaction>
</comment>
<comment type="pathway">
    <text evidence="5 6 12">Lipid metabolism; sphingolipid metabolism.</text>
</comment>
<comment type="subcellular location">
    <subcellularLocation>
        <location evidence="5">Endoplasmic reticulum membrane</location>
        <topology evidence="5">Multi-pass membrane protein</topology>
    </subcellularLocation>
</comment>
<comment type="tissue specificity">
    <text evidence="5 8">Broadly expressed, with highest levels in kidney and brain (at protein level).</text>
</comment>
<comment type="induction">
    <text evidence="9">Up-regulated in liver in response to high-fat diet.</text>
</comment>
<comment type="PTM">
    <text evidence="5 8">N-glycosylated (PubMed:15823095, PubMed:23760501). Glycosylation on Asn-18 is not necessary for function (PubMed:15823095).</text>
</comment>
<comment type="PTM">
    <text evidence="10">Acetylated (PubMed:26620563). Deacetylation by SIRT3 increases enzyme activity and promotes mitochondrial ceramide accumulation (PubMed:26620563).</text>
</comment>
<comment type="PTM">
    <text evidence="1">Phosphorylated at the C-terminus by CK2.</text>
</comment>
<comment type="disruption phenotype">
    <text evidence="8 9 12">Mice show behavioral abnormalities including a clasping abnormality of their hind limbs and a habituation deficit (PubMed:23760501). Knockout mice are protected against high fat diet-induced obesity and glucose intolerance (PubMed:25295788, PubMed:31150623). Mice show decreased palmitoyl (C16:0) ceramide pools and increased energy expenditure (PubMed:25295788, PubMed:31150623). Conditional deletion in brown adipose tissue or liver also protects mice against high fat diet-induced obesity, while it is not the case with specific deletion in myeloid cells (PubMed:25295788).</text>
</comment>
<comment type="caution">
    <text evidence="2 5">Some prediction bioinformatics tools predict the presence of a homeobox domain (By similarity). However, the domain is degenerate and residues that are important for DNA-binding are absent (By similarity). Moreover, the protein localizes in the endoplasmic reticulum and not in the nucleus, strongly suggesting that it does not constitute a canonical homeobox domain (PubMed:15823095).</text>
</comment>
<feature type="chain" id="PRO_0000185517" description="Ceramide synthase 6">
    <location>
        <begin position="1"/>
        <end position="384"/>
    </location>
</feature>
<feature type="topological domain" description="Lumenal" evidence="15">
    <location>
        <begin position="1"/>
        <end position="34"/>
    </location>
</feature>
<feature type="transmembrane region" description="Helical" evidence="2">
    <location>
        <begin position="35"/>
        <end position="55"/>
    </location>
</feature>
<feature type="transmembrane region" description="Helical" evidence="2">
    <location>
        <begin position="174"/>
        <end position="194"/>
    </location>
</feature>
<feature type="transmembrane region" description="Helical" evidence="2">
    <location>
        <begin position="205"/>
        <end position="225"/>
    </location>
</feature>
<feature type="transmembrane region" description="Helical" evidence="2">
    <location>
        <begin position="263"/>
        <end position="283"/>
    </location>
</feature>
<feature type="transmembrane region" description="Helical" evidence="2">
    <location>
        <begin position="303"/>
        <end position="323"/>
    </location>
</feature>
<feature type="topological domain" description="Cytoplasmic" evidence="1">
    <location>
        <begin position="324"/>
        <end position="384"/>
    </location>
</feature>
<feature type="domain" description="TLC" evidence="3">
    <location>
        <begin position="130"/>
        <end position="331"/>
    </location>
</feature>
<feature type="region of interest" description="Homeobox-like" evidence="14">
    <location>
        <begin position="66"/>
        <end position="127"/>
    </location>
</feature>
<feature type="region of interest" description="Disordered" evidence="4">
    <location>
        <begin position="335"/>
        <end position="384"/>
    </location>
</feature>
<feature type="compositionally biased region" description="Low complexity" evidence="4">
    <location>
        <begin position="361"/>
        <end position="373"/>
    </location>
</feature>
<feature type="site" description="Not glycosylated">
    <location>
        <position position="285"/>
    </location>
</feature>
<feature type="glycosylation site" description="N-linked (GlcNAc...) asparagine" evidence="5">
    <location>
        <position position="18"/>
    </location>
</feature>
<feature type="helix" evidence="17">
    <location>
        <begin position="79"/>
        <end position="88"/>
    </location>
</feature>
<feature type="helix" evidence="17">
    <location>
        <begin position="96"/>
        <end position="106"/>
    </location>
</feature>
<feature type="helix" evidence="17">
    <location>
        <begin position="110"/>
        <end position="123"/>
    </location>
</feature>
<gene>
    <name evidence="16" type="primary">Cers6</name>
    <name evidence="13" type="synonym">Lass6</name>
</gene>
<organism>
    <name type="scientific">Mus musculus</name>
    <name type="common">Mouse</name>
    <dbReference type="NCBI Taxonomy" id="10090"/>
    <lineage>
        <taxon>Eukaryota</taxon>
        <taxon>Metazoa</taxon>
        <taxon>Chordata</taxon>
        <taxon>Craniata</taxon>
        <taxon>Vertebrata</taxon>
        <taxon>Euteleostomi</taxon>
        <taxon>Mammalia</taxon>
        <taxon>Eutheria</taxon>
        <taxon>Euarchontoglires</taxon>
        <taxon>Glires</taxon>
        <taxon>Rodentia</taxon>
        <taxon>Myomorpha</taxon>
        <taxon>Muroidea</taxon>
        <taxon>Muridae</taxon>
        <taxon>Murinae</taxon>
        <taxon>Mus</taxon>
        <taxon>Mus</taxon>
    </lineage>
</organism>
<name>CERS6_MOUSE</name>
<evidence type="ECO:0000250" key="1">
    <source>
        <dbReference type="UniProtKB" id="Q6ZMG9"/>
    </source>
</evidence>
<evidence type="ECO:0000255" key="2"/>
<evidence type="ECO:0000255" key="3">
    <source>
        <dbReference type="PROSITE-ProRule" id="PRU00205"/>
    </source>
</evidence>
<evidence type="ECO:0000256" key="4">
    <source>
        <dbReference type="SAM" id="MobiDB-lite"/>
    </source>
</evidence>
<evidence type="ECO:0000269" key="5">
    <source>
    </source>
</evidence>
<evidence type="ECO:0000269" key="6">
    <source>
    </source>
</evidence>
<evidence type="ECO:0000269" key="7">
    <source>
    </source>
</evidence>
<evidence type="ECO:0000269" key="8">
    <source>
    </source>
</evidence>
<evidence type="ECO:0000269" key="9">
    <source>
    </source>
</evidence>
<evidence type="ECO:0000269" key="10">
    <source>
    </source>
</evidence>
<evidence type="ECO:0000269" key="11">
    <source>
    </source>
</evidence>
<evidence type="ECO:0000269" key="12">
    <source>
    </source>
</evidence>
<evidence type="ECO:0000303" key="13">
    <source>
    </source>
</evidence>
<evidence type="ECO:0000305" key="14"/>
<evidence type="ECO:0000305" key="15">
    <source>
    </source>
</evidence>
<evidence type="ECO:0000312" key="16">
    <source>
        <dbReference type="MGI" id="MGI:2442564"/>
    </source>
</evidence>
<evidence type="ECO:0007829" key="17">
    <source>
        <dbReference type="PDB" id="1X2M"/>
    </source>
</evidence>
<accession>Q8C172</accession>
<accession>Q3U817</accession>
<accession>Q8BV12</accession>